<gene>
    <name type="primary">ARG2</name>
</gene>
<feature type="transit peptide" description="Mitochondrion" evidence="4">
    <location>
        <begin position="1"/>
        <end position="22"/>
    </location>
</feature>
<feature type="chain" id="PRO_0000002084" description="Arginase-2, mitochondrial">
    <location>
        <begin position="23"/>
        <end position="354"/>
    </location>
</feature>
<feature type="region of interest" description="Disordered" evidence="6">
    <location>
        <begin position="334"/>
        <end position="354"/>
    </location>
</feature>
<feature type="binding site" evidence="7 14 15 16 17 18 19 20">
    <location>
        <position position="120"/>
    </location>
    <ligand>
        <name>Mn(2+)</name>
        <dbReference type="ChEBI" id="CHEBI:29035"/>
        <label>1</label>
    </ligand>
</feature>
<feature type="binding site" evidence="7 14 15 16 17 18 19 20">
    <location>
        <position position="143"/>
    </location>
    <ligand>
        <name>Mn(2+)</name>
        <dbReference type="ChEBI" id="CHEBI:29035"/>
        <label>1</label>
    </ligand>
</feature>
<feature type="binding site" evidence="7 14 15 16 17 18 19 20">
    <location>
        <position position="143"/>
    </location>
    <ligand>
        <name>Mn(2+)</name>
        <dbReference type="ChEBI" id="CHEBI:29035"/>
        <label>2</label>
    </ligand>
</feature>
<feature type="binding site" evidence="7 14 15 16 17 18 19 20">
    <location>
        <begin position="145"/>
        <end position="149"/>
    </location>
    <ligand>
        <name>substrate</name>
    </ligand>
</feature>
<feature type="binding site" evidence="7 14 15 16 17 18 19 20">
    <location>
        <position position="145"/>
    </location>
    <ligand>
        <name>Mn(2+)</name>
        <dbReference type="ChEBI" id="CHEBI:29035"/>
        <label>2</label>
    </ligand>
</feature>
<feature type="binding site" evidence="7 14 15 16 17 18 19 20">
    <location>
        <position position="147"/>
    </location>
    <ligand>
        <name>Mn(2+)</name>
        <dbReference type="ChEBI" id="CHEBI:29035"/>
        <label>1</label>
    </ligand>
</feature>
<feature type="binding site" evidence="7 14 15 16 17 18 19 20">
    <location>
        <begin position="156"/>
        <end position="158"/>
    </location>
    <ligand>
        <name>substrate</name>
    </ligand>
</feature>
<feature type="binding site" evidence="7 14 15 16 17 18 19 20">
    <location>
        <position position="202"/>
    </location>
    <ligand>
        <name>substrate</name>
    </ligand>
</feature>
<feature type="binding site" evidence="7 14 15 16 17 18 19 20">
    <location>
        <position position="251"/>
    </location>
    <ligand>
        <name>Mn(2+)</name>
        <dbReference type="ChEBI" id="CHEBI:29035"/>
        <label>1</label>
    </ligand>
</feature>
<feature type="binding site" evidence="7 14 15 16 17 18 19 20">
    <location>
        <position position="251"/>
    </location>
    <ligand>
        <name>Mn(2+)</name>
        <dbReference type="ChEBI" id="CHEBI:29035"/>
        <label>2</label>
    </ligand>
</feature>
<feature type="binding site" evidence="7 14 15 16 17 18 19 20">
    <location>
        <position position="253"/>
    </location>
    <ligand>
        <name>Mn(2+)</name>
        <dbReference type="ChEBI" id="CHEBI:29035"/>
        <label>2</label>
    </ligand>
</feature>
<feature type="binding site" evidence="3">
    <location>
        <position position="265"/>
    </location>
    <ligand>
        <name>substrate</name>
    </ligand>
</feature>
<feature type="binding site" evidence="7 14 15 16 17 18 19 20">
    <location>
        <position position="296"/>
    </location>
    <ligand>
        <name>substrate</name>
    </ligand>
</feature>
<feature type="sequence variant" id="VAR_033520" description="In dbSNP:rs17104534.">
    <original>G</original>
    <variation>R</variation>
    <location>
        <position position="240"/>
    </location>
</feature>
<feature type="strand" evidence="22">
    <location>
        <begin position="25"/>
        <end position="30"/>
    </location>
</feature>
<feature type="helix" evidence="22">
    <location>
        <begin position="42"/>
        <end position="44"/>
    </location>
</feature>
<feature type="helix" evidence="22">
    <location>
        <begin position="45"/>
        <end position="51"/>
    </location>
</feature>
<feature type="helix" evidence="22">
    <location>
        <begin position="54"/>
        <end position="60"/>
    </location>
</feature>
<feature type="strand" evidence="22">
    <location>
        <begin position="64"/>
        <end position="70"/>
    </location>
</feature>
<feature type="turn" evidence="22">
    <location>
        <begin position="83"/>
        <end position="85"/>
    </location>
</feature>
<feature type="helix" evidence="22">
    <location>
        <begin position="89"/>
        <end position="108"/>
    </location>
</feature>
<feature type="strand" evidence="22">
    <location>
        <begin position="112"/>
        <end position="116"/>
    </location>
</feature>
<feature type="helix" evidence="22">
    <location>
        <begin position="120"/>
        <end position="122"/>
    </location>
</feature>
<feature type="helix" evidence="22">
    <location>
        <begin position="123"/>
        <end position="133"/>
    </location>
</feature>
<feature type="strand" evidence="22">
    <location>
        <begin position="138"/>
        <end position="145"/>
    </location>
</feature>
<feature type="turn" evidence="22">
    <location>
        <begin position="151"/>
        <end position="153"/>
    </location>
</feature>
<feature type="helix" evidence="22">
    <location>
        <begin position="159"/>
        <end position="161"/>
    </location>
</feature>
<feature type="helix" evidence="22">
    <location>
        <begin position="163"/>
        <end position="166"/>
    </location>
</feature>
<feature type="helix" evidence="22">
    <location>
        <begin position="169"/>
        <end position="174"/>
    </location>
</feature>
<feature type="helix" evidence="22">
    <location>
        <begin position="190"/>
        <end position="192"/>
    </location>
</feature>
<feature type="strand" evidence="22">
    <location>
        <begin position="193"/>
        <end position="198"/>
    </location>
</feature>
<feature type="helix" evidence="22">
    <location>
        <begin position="203"/>
        <end position="211"/>
    </location>
</feature>
<feature type="strand" evidence="22">
    <location>
        <begin position="215"/>
        <end position="218"/>
    </location>
</feature>
<feature type="helix" evidence="22">
    <location>
        <begin position="219"/>
        <end position="225"/>
    </location>
</feature>
<feature type="helix" evidence="22">
    <location>
        <begin position="227"/>
        <end position="239"/>
    </location>
</feature>
<feature type="strand" evidence="22">
    <location>
        <begin position="240"/>
        <end position="242"/>
    </location>
</feature>
<feature type="strand" evidence="22">
    <location>
        <begin position="246"/>
        <end position="251"/>
    </location>
</feature>
<feature type="helix" evidence="22">
    <location>
        <begin position="252"/>
        <end position="254"/>
    </location>
</feature>
<feature type="turn" evidence="22">
    <location>
        <begin position="257"/>
        <end position="259"/>
    </location>
</feature>
<feature type="strand" evidence="22">
    <location>
        <begin position="262"/>
        <end position="265"/>
    </location>
</feature>
<feature type="helix" evidence="22">
    <location>
        <begin position="273"/>
        <end position="285"/>
    </location>
</feature>
<feature type="strand" evidence="22">
    <location>
        <begin position="289"/>
        <end position="295"/>
    </location>
</feature>
<feature type="helix" evidence="22">
    <location>
        <begin position="299"/>
        <end position="301"/>
    </location>
</feature>
<feature type="strand" evidence="21">
    <location>
        <begin position="302"/>
        <end position="304"/>
    </location>
</feature>
<feature type="helix" evidence="22">
    <location>
        <begin position="305"/>
        <end position="322"/>
    </location>
</feature>
<reference key="1">
    <citation type="journal article" date="1996" name="FEBS Lett.">
        <title>Molecular cloning of cDNA for nonhepatic mitochondrial arginase (arginase II) and comparison of its induction with nitric oxide synthase in a murine macrophage-like cell line.</title>
        <authorList>
            <person name="Gotoh T."/>
            <person name="Sonoki T."/>
            <person name="Nagasaki A."/>
            <person name="Terada K."/>
            <person name="Takiguchi M."/>
            <person name="Mori M."/>
        </authorList>
    </citation>
    <scope>NUCLEOTIDE SEQUENCE [MRNA]</scope>
    <scope>SUBCELLULAR LOCATION</scope>
</reference>
<reference key="2">
    <citation type="journal article" date="1996" name="Genomics">
        <title>Cloning and characterization of the human type II arginase gene.</title>
        <authorList>
            <person name="Vockley J.G."/>
            <person name="Jenkinson C.P."/>
            <person name="Shukla H."/>
            <person name="Kern R.M."/>
            <person name="Grody W.W."/>
            <person name="Cederbaum S.D."/>
        </authorList>
    </citation>
    <scope>NUCLEOTIDE SEQUENCE [MRNA]</scope>
</reference>
<reference key="3">
    <citation type="journal article" date="1997" name="Gene">
        <title>Human type II arginase: sequence analysis and tissue-specific expression.</title>
        <authorList>
            <person name="Morris S.M. Jr."/>
            <person name="Bhamidipati D."/>
            <person name="Kepka-Lenhart D."/>
        </authorList>
    </citation>
    <scope>NUCLEOTIDE SEQUENCE [MRNA]</scope>
    <source>
        <tissue>Kidney</tissue>
    </source>
</reference>
<reference key="4">
    <citation type="submission" date="2002-01" db="EMBL/GenBank/DDBJ databases">
        <authorList>
            <person name="Lee Y.T."/>
            <person name="Miller J.L."/>
        </authorList>
    </citation>
    <scope>NUCLEOTIDE SEQUENCE [MRNA]</scope>
    <source>
        <tissue>Erythroblast</tissue>
    </source>
</reference>
<reference key="5">
    <citation type="submission" date="2004-06" db="EMBL/GenBank/DDBJ databases">
        <title>Cloning of human full open reading frames in Gateway(TM) system entry vector (pDONR201).</title>
        <authorList>
            <person name="Halleck A."/>
            <person name="Ebert L."/>
            <person name="Mkoundinya M."/>
            <person name="Schick M."/>
            <person name="Eisenstein S."/>
            <person name="Neubert P."/>
            <person name="Kstrang K."/>
            <person name="Schatten R."/>
            <person name="Shen B."/>
            <person name="Henze S."/>
            <person name="Mar W."/>
            <person name="Korn B."/>
            <person name="Zuo D."/>
            <person name="Hu Y."/>
            <person name="LaBaer J."/>
        </authorList>
    </citation>
    <scope>NUCLEOTIDE SEQUENCE [LARGE SCALE MRNA]</scope>
</reference>
<reference key="6">
    <citation type="journal article" date="2004" name="Nat. Genet.">
        <title>Complete sequencing and characterization of 21,243 full-length human cDNAs.</title>
        <authorList>
            <person name="Ota T."/>
            <person name="Suzuki Y."/>
            <person name="Nishikawa T."/>
            <person name="Otsuki T."/>
            <person name="Sugiyama T."/>
            <person name="Irie R."/>
            <person name="Wakamatsu A."/>
            <person name="Hayashi K."/>
            <person name="Sato H."/>
            <person name="Nagai K."/>
            <person name="Kimura K."/>
            <person name="Makita H."/>
            <person name="Sekine M."/>
            <person name="Obayashi M."/>
            <person name="Nishi T."/>
            <person name="Shibahara T."/>
            <person name="Tanaka T."/>
            <person name="Ishii S."/>
            <person name="Yamamoto J."/>
            <person name="Saito K."/>
            <person name="Kawai Y."/>
            <person name="Isono Y."/>
            <person name="Nakamura Y."/>
            <person name="Nagahari K."/>
            <person name="Murakami K."/>
            <person name="Yasuda T."/>
            <person name="Iwayanagi T."/>
            <person name="Wagatsuma M."/>
            <person name="Shiratori A."/>
            <person name="Sudo H."/>
            <person name="Hosoiri T."/>
            <person name="Kaku Y."/>
            <person name="Kodaira H."/>
            <person name="Kondo H."/>
            <person name="Sugawara M."/>
            <person name="Takahashi M."/>
            <person name="Kanda K."/>
            <person name="Yokoi T."/>
            <person name="Furuya T."/>
            <person name="Kikkawa E."/>
            <person name="Omura Y."/>
            <person name="Abe K."/>
            <person name="Kamihara K."/>
            <person name="Katsuta N."/>
            <person name="Sato K."/>
            <person name="Tanikawa M."/>
            <person name="Yamazaki M."/>
            <person name="Ninomiya K."/>
            <person name="Ishibashi T."/>
            <person name="Yamashita H."/>
            <person name="Murakawa K."/>
            <person name="Fujimori K."/>
            <person name="Tanai H."/>
            <person name="Kimata M."/>
            <person name="Watanabe M."/>
            <person name="Hiraoka S."/>
            <person name="Chiba Y."/>
            <person name="Ishida S."/>
            <person name="Ono Y."/>
            <person name="Takiguchi S."/>
            <person name="Watanabe S."/>
            <person name="Yosida M."/>
            <person name="Hotuta T."/>
            <person name="Kusano J."/>
            <person name="Kanehori K."/>
            <person name="Takahashi-Fujii A."/>
            <person name="Hara H."/>
            <person name="Tanase T.-O."/>
            <person name="Nomura Y."/>
            <person name="Togiya S."/>
            <person name="Komai F."/>
            <person name="Hara R."/>
            <person name="Takeuchi K."/>
            <person name="Arita M."/>
            <person name="Imose N."/>
            <person name="Musashino K."/>
            <person name="Yuuki H."/>
            <person name="Oshima A."/>
            <person name="Sasaki N."/>
            <person name="Aotsuka S."/>
            <person name="Yoshikawa Y."/>
            <person name="Matsunawa H."/>
            <person name="Ichihara T."/>
            <person name="Shiohata N."/>
            <person name="Sano S."/>
            <person name="Moriya S."/>
            <person name="Momiyama H."/>
            <person name="Satoh N."/>
            <person name="Takami S."/>
            <person name="Terashima Y."/>
            <person name="Suzuki O."/>
            <person name="Nakagawa S."/>
            <person name="Senoh A."/>
            <person name="Mizoguchi H."/>
            <person name="Goto Y."/>
            <person name="Shimizu F."/>
            <person name="Wakebe H."/>
            <person name="Hishigaki H."/>
            <person name="Watanabe T."/>
            <person name="Sugiyama A."/>
            <person name="Takemoto M."/>
            <person name="Kawakami B."/>
            <person name="Yamazaki M."/>
            <person name="Watanabe K."/>
            <person name="Kumagai A."/>
            <person name="Itakura S."/>
            <person name="Fukuzumi Y."/>
            <person name="Fujimori Y."/>
            <person name="Komiyama M."/>
            <person name="Tashiro H."/>
            <person name="Tanigami A."/>
            <person name="Fujiwara T."/>
            <person name="Ono T."/>
            <person name="Yamada K."/>
            <person name="Fujii Y."/>
            <person name="Ozaki K."/>
            <person name="Hirao M."/>
            <person name="Ohmori Y."/>
            <person name="Kawabata A."/>
            <person name="Hikiji T."/>
            <person name="Kobatake N."/>
            <person name="Inagaki H."/>
            <person name="Ikema Y."/>
            <person name="Okamoto S."/>
            <person name="Okitani R."/>
            <person name="Kawakami T."/>
            <person name="Noguchi S."/>
            <person name="Itoh T."/>
            <person name="Shigeta K."/>
            <person name="Senba T."/>
            <person name="Matsumura K."/>
            <person name="Nakajima Y."/>
            <person name="Mizuno T."/>
            <person name="Morinaga M."/>
            <person name="Sasaki M."/>
            <person name="Togashi T."/>
            <person name="Oyama M."/>
            <person name="Hata H."/>
            <person name="Watanabe M."/>
            <person name="Komatsu T."/>
            <person name="Mizushima-Sugano J."/>
            <person name="Satoh T."/>
            <person name="Shirai Y."/>
            <person name="Takahashi Y."/>
            <person name="Nakagawa K."/>
            <person name="Okumura K."/>
            <person name="Nagase T."/>
            <person name="Nomura N."/>
            <person name="Kikuchi H."/>
            <person name="Masuho Y."/>
            <person name="Yamashita R."/>
            <person name="Nakai K."/>
            <person name="Yada T."/>
            <person name="Nakamura Y."/>
            <person name="Ohara O."/>
            <person name="Isogai T."/>
            <person name="Sugano S."/>
        </authorList>
    </citation>
    <scope>NUCLEOTIDE SEQUENCE [LARGE SCALE MRNA]</scope>
    <source>
        <tissue>Hippocampus</tissue>
    </source>
</reference>
<reference key="7">
    <citation type="submission" date="2005-07" db="EMBL/GenBank/DDBJ databases">
        <authorList>
            <person name="Mural R.J."/>
            <person name="Istrail S."/>
            <person name="Sutton G.G."/>
            <person name="Florea L."/>
            <person name="Halpern A.L."/>
            <person name="Mobarry C.M."/>
            <person name="Lippert R."/>
            <person name="Walenz B."/>
            <person name="Shatkay H."/>
            <person name="Dew I."/>
            <person name="Miller J.R."/>
            <person name="Flanigan M.J."/>
            <person name="Edwards N.J."/>
            <person name="Bolanos R."/>
            <person name="Fasulo D."/>
            <person name="Halldorsson B.V."/>
            <person name="Hannenhalli S."/>
            <person name="Turner R."/>
            <person name="Yooseph S."/>
            <person name="Lu F."/>
            <person name="Nusskern D.R."/>
            <person name="Shue B.C."/>
            <person name="Zheng X.H."/>
            <person name="Zhong F."/>
            <person name="Delcher A.L."/>
            <person name="Huson D.H."/>
            <person name="Kravitz S.A."/>
            <person name="Mouchard L."/>
            <person name="Reinert K."/>
            <person name="Remington K.A."/>
            <person name="Clark A.G."/>
            <person name="Waterman M.S."/>
            <person name="Eichler E.E."/>
            <person name="Adams M.D."/>
            <person name="Hunkapiller M.W."/>
            <person name="Myers E.W."/>
            <person name="Venter J.C."/>
        </authorList>
    </citation>
    <scope>NUCLEOTIDE SEQUENCE [LARGE SCALE GENOMIC DNA]</scope>
</reference>
<reference key="8">
    <citation type="journal article" date="2004" name="Genome Res.">
        <title>The status, quality, and expansion of the NIH full-length cDNA project: the Mammalian Gene Collection (MGC).</title>
        <authorList>
            <consortium name="The MGC Project Team"/>
        </authorList>
    </citation>
    <scope>NUCLEOTIDE SEQUENCE [LARGE SCALE MRNA]</scope>
    <source>
        <tissue>Brain</tissue>
        <tissue>Lung</tissue>
        <tissue>Muscle</tissue>
        <tissue>Prostate</tissue>
        <tissue>Testis</tissue>
    </source>
</reference>
<reference key="9">
    <citation type="journal article" date="2011" name="BMC Syst. Biol.">
        <title>Initial characterization of the human central proteome.</title>
        <authorList>
            <person name="Burkard T.R."/>
            <person name="Planyavsky M."/>
            <person name="Kaupe I."/>
            <person name="Breitwieser F.P."/>
            <person name="Buerckstuemmer T."/>
            <person name="Bennett K.L."/>
            <person name="Superti-Furga G."/>
            <person name="Colinge J."/>
        </authorList>
    </citation>
    <scope>IDENTIFICATION BY MASS SPECTROMETRY [LARGE SCALE ANALYSIS]</scope>
</reference>
<reference key="10">
    <citation type="journal article" date="2012" name="Aging Cell">
        <title>Positive crosstalk between arginase-II and S6K1 in vascular endothelial inflammation and aging.</title>
        <authorList>
            <person name="Yepuri G."/>
            <person name="Velagapudi S."/>
            <person name="Xiong Y."/>
            <person name="Rajapakse A.G."/>
            <person name="Montani J.P."/>
            <person name="Ming X.F."/>
            <person name="Yang Z."/>
        </authorList>
    </citation>
    <scope>FUNCTION</scope>
</reference>
<reference key="11">
    <citation type="journal article" date="2013" name="J. Am. Heart Assoc.">
        <title>Arginase-II induces vascular smooth muscle cell senescence and apoptosis through p66Shc and p53 independently of its l-arginine ureahydrolase activity: implications for atherosclerotic plaque vulnerability.</title>
        <authorList>
            <person name="Xiong Y."/>
            <person name="Yu Y."/>
            <person name="Montani J.P."/>
            <person name="Yang Z."/>
            <person name="Ming X.F."/>
        </authorList>
    </citation>
    <scope>FUNCTION</scope>
</reference>
<reference key="12">
    <citation type="journal article" date="2014" name="Autophagy">
        <title>ARG2 impairs endothelial autophagy through regulation of MTOR and PRKAA/AMPK signaling in advanced atherosclerosis.</title>
        <authorList>
            <person name="Xiong Y."/>
            <person name="Yepuri G."/>
            <person name="Forbiteh M."/>
            <person name="Yu Y."/>
            <person name="Montani J.P."/>
            <person name="Yang Z."/>
            <person name="Ming X.F."/>
        </authorList>
    </citation>
    <scope>FUNCTION</scope>
</reference>
<reference key="13">
    <citation type="journal article" date="2016" name="Cell">
        <title>L-arginine modulates T cell metabolism and enhances survival and anti-tumor activity.</title>
        <authorList>
            <person name="Geiger R."/>
            <person name="Rieckmann J.C."/>
            <person name="Wolf T."/>
            <person name="Basso C."/>
            <person name="Feng Y."/>
            <person name="Fuhrer T."/>
            <person name="Kogadeeva M."/>
            <person name="Picotti P."/>
            <person name="Meissner F."/>
            <person name="Mann M."/>
            <person name="Zamboni N."/>
            <person name="Sallusto F."/>
            <person name="Lanzavecchia A."/>
        </authorList>
    </citation>
    <scope>FUNCTION</scope>
    <scope>TISSUE SPECIFICITY</scope>
</reference>
<reference key="14">
    <citation type="journal article" date="2016" name="J. Clin. Invest.">
        <title>Increased mitochondrial arginine metabolism supports bioenergetics in asthma.</title>
        <authorList>
            <person name="Xu W."/>
            <person name="Ghosh S."/>
            <person name="Comhair S.A."/>
            <person name="Asosingh K."/>
            <person name="Janocha A.J."/>
            <person name="Mavrakis D.A."/>
            <person name="Bennett C.D."/>
            <person name="Gruca L.L."/>
            <person name="Graham B.B."/>
            <person name="Queisser K.A."/>
            <person name="Kao C.C."/>
            <person name="Wedes S.H."/>
            <person name="Petrich J.M."/>
            <person name="Tuder R.M."/>
            <person name="Kalhan S.C."/>
            <person name="Erzurum S.C."/>
        </authorList>
    </citation>
    <scope>FUNCTION</scope>
</reference>
<reference key="15">
    <citation type="journal article" date="2017" name="Nature">
        <title>Human fetal dendritic cells promote prenatal T-cell immune suppression through arginase-2.</title>
        <authorList>
            <person name="McGovern N."/>
            <person name="Shin A."/>
            <person name="Low G."/>
            <person name="Low D."/>
            <person name="Duan K."/>
            <person name="Yao L.J."/>
            <person name="Msallam R."/>
            <person name="Low I."/>
            <person name="Shadan N.B."/>
            <person name="Sumatoh H.R."/>
            <person name="Soon E."/>
            <person name="Lum J."/>
            <person name="Mok E."/>
            <person name="Hubert S."/>
            <person name="See P."/>
            <person name="Kunxiang E.H."/>
            <person name="Lee Y.H."/>
            <person name="Janela B."/>
            <person name="Choolani M."/>
            <person name="Mattar C.N.Z."/>
            <person name="Fan Y."/>
            <person name="Lim T.K.H."/>
            <person name="Chan D.K.H."/>
            <person name="Tan K.K."/>
            <person name="Tam J.K.C."/>
            <person name="Schuster C."/>
            <person name="Elbe-Buerger A."/>
            <person name="Wang X.N."/>
            <person name="Bigley V."/>
            <person name="Collin M."/>
            <person name="Haniffa M."/>
            <person name="Schlitzer A."/>
            <person name="Poidinger M."/>
            <person name="Albani S."/>
            <person name="Larbi A."/>
            <person name="Newell E.W."/>
            <person name="Chan J.K.Y."/>
            <person name="Ginhoux F."/>
        </authorList>
    </citation>
    <scope>FUNCTION</scope>
</reference>
<reference key="16">
    <citation type="journal article" date="2003" name="Biochemistry">
        <title>Human arginase II: crystal structure and physiological role in male and female sexual arousal.</title>
        <authorList>
            <person name="Cama E."/>
            <person name="Colleluori D.M."/>
            <person name="Emig F.A."/>
            <person name="Shin H."/>
            <person name="Kim S.W."/>
            <person name="Kim N.N."/>
            <person name="Traish A.M."/>
            <person name="Ash D.E."/>
            <person name="Christianson D.W."/>
        </authorList>
    </citation>
    <scope>X-RAY CRYSTALLOGRAPHY (2.70 ANGSTROMS) OF 24-329 IN COMPLEX WITH MANGANESE IONS AND S-2-(BORONOETHYL)-L-CYSTEINE</scope>
    <scope>COFACTOR</scope>
    <scope>SUBUNIT</scope>
    <scope>FUNCTION</scope>
    <scope>CATALYTIC ACTIVITY</scope>
</reference>
<dbReference type="EC" id="3.5.3.1" evidence="7"/>
<dbReference type="EMBL" id="D86724">
    <property type="protein sequence ID" value="BAA13158.1"/>
    <property type="molecule type" value="mRNA"/>
</dbReference>
<dbReference type="EMBL" id="U75667">
    <property type="protein sequence ID" value="AAB39855.1"/>
    <property type="molecule type" value="mRNA"/>
</dbReference>
<dbReference type="EMBL" id="U82256">
    <property type="protein sequence ID" value="AAC51664.1"/>
    <property type="molecule type" value="mRNA"/>
</dbReference>
<dbReference type="EMBL" id="AY074489">
    <property type="protein sequence ID" value="AAL71548.1"/>
    <property type="molecule type" value="mRNA"/>
</dbReference>
<dbReference type="EMBL" id="CR536550">
    <property type="protein sequence ID" value="CAG38787.1"/>
    <property type="molecule type" value="mRNA"/>
</dbReference>
<dbReference type="EMBL" id="AK312484">
    <property type="protein sequence ID" value="BAG35387.1"/>
    <property type="molecule type" value="mRNA"/>
</dbReference>
<dbReference type="EMBL" id="CH471061">
    <property type="protein sequence ID" value="EAW80943.1"/>
    <property type="molecule type" value="Genomic_DNA"/>
</dbReference>
<dbReference type="EMBL" id="BC001350">
    <property type="protein sequence ID" value="AAH01350.1"/>
    <property type="molecule type" value="mRNA"/>
</dbReference>
<dbReference type="EMBL" id="BC008464">
    <property type="protein sequence ID" value="AAH08464.1"/>
    <property type="molecule type" value="mRNA"/>
</dbReference>
<dbReference type="EMBL" id="BC029050">
    <property type="protein sequence ID" value="AAH29050.1"/>
    <property type="molecule type" value="mRNA"/>
</dbReference>
<dbReference type="CCDS" id="CCDS9785.1"/>
<dbReference type="RefSeq" id="NP_001163.1">
    <property type="nucleotide sequence ID" value="NM_001172.4"/>
</dbReference>
<dbReference type="PDB" id="1PQ3">
    <property type="method" value="X-ray"/>
    <property type="resolution" value="2.70 A"/>
    <property type="chains" value="A/B/C/D/E/F=24-329"/>
</dbReference>
<dbReference type="PDB" id="4HZE">
    <property type="method" value="X-ray"/>
    <property type="resolution" value="1.60 A"/>
    <property type="chains" value="A/B/C=24-329"/>
</dbReference>
<dbReference type="PDB" id="4I06">
    <property type="method" value="X-ray"/>
    <property type="resolution" value="1.80 A"/>
    <property type="chains" value="A/B/C=24-329"/>
</dbReference>
<dbReference type="PDB" id="4IE2">
    <property type="method" value="X-ray"/>
    <property type="resolution" value="2.21 A"/>
    <property type="chains" value="A/B/C=24-329"/>
</dbReference>
<dbReference type="PDB" id="4IE3">
    <property type="method" value="X-ray"/>
    <property type="resolution" value="2.35 A"/>
    <property type="chains" value="A/B/C=24-329"/>
</dbReference>
<dbReference type="PDB" id="4IXU">
    <property type="method" value="X-ray"/>
    <property type="resolution" value="1.90 A"/>
    <property type="chains" value="A/B/C=24-329"/>
</dbReference>
<dbReference type="PDB" id="4IXV">
    <property type="method" value="X-ray"/>
    <property type="resolution" value="2.30 A"/>
    <property type="chains" value="A/B/C=24-329"/>
</dbReference>
<dbReference type="PDB" id="6Q37">
    <property type="method" value="X-ray"/>
    <property type="resolution" value="2.21 A"/>
    <property type="chains" value="A/B/C=24-329"/>
</dbReference>
<dbReference type="PDB" id="6Q39">
    <property type="method" value="X-ray"/>
    <property type="resolution" value="2.21 A"/>
    <property type="chains" value="A/B/C=24-329"/>
</dbReference>
<dbReference type="PDB" id="6SS2">
    <property type="method" value="X-ray"/>
    <property type="resolution" value="2.40 A"/>
    <property type="chains" value="AAA=23-354"/>
</dbReference>
<dbReference type="PDB" id="6SS4">
    <property type="method" value="X-ray"/>
    <property type="resolution" value="2.90 A"/>
    <property type="chains" value="AAA=23-354"/>
</dbReference>
<dbReference type="PDB" id="6SS6">
    <property type="method" value="X-ray"/>
    <property type="resolution" value="3.25 A"/>
    <property type="chains" value="AAA/BBB/CCC=23-354"/>
</dbReference>
<dbReference type="PDB" id="8RFA">
    <property type="method" value="X-ray"/>
    <property type="resolution" value="1.76 A"/>
    <property type="chains" value="A/B/C=22-341"/>
</dbReference>
<dbReference type="PDB" id="8RG6">
    <property type="method" value="X-ray"/>
    <property type="resolution" value="1.62 A"/>
    <property type="chains" value="A/B/C=22-341"/>
</dbReference>
<dbReference type="PDB" id="8RGF">
    <property type="method" value="X-ray"/>
    <property type="resolution" value="1.86 A"/>
    <property type="chains" value="A/B/C=22-341"/>
</dbReference>
<dbReference type="PDB" id="8RGU">
    <property type="method" value="X-ray"/>
    <property type="resolution" value="1.90 A"/>
    <property type="chains" value="A/B/C=22-341"/>
</dbReference>
<dbReference type="PDB" id="8RIM">
    <property type="method" value="X-ray"/>
    <property type="resolution" value="1.90 A"/>
    <property type="chains" value="A/B/C=22-341"/>
</dbReference>
<dbReference type="PDB" id="9FRV">
    <property type="method" value="X-ray"/>
    <property type="resolution" value="2.06 A"/>
    <property type="chains" value="A/B/C=22-341"/>
</dbReference>
<dbReference type="PDBsum" id="1PQ3"/>
<dbReference type="PDBsum" id="4HZE"/>
<dbReference type="PDBsum" id="4I06"/>
<dbReference type="PDBsum" id="4IE2"/>
<dbReference type="PDBsum" id="4IE3"/>
<dbReference type="PDBsum" id="4IXU"/>
<dbReference type="PDBsum" id="4IXV"/>
<dbReference type="PDBsum" id="6Q37"/>
<dbReference type="PDBsum" id="6Q39"/>
<dbReference type="PDBsum" id="6SS2"/>
<dbReference type="PDBsum" id="6SS4"/>
<dbReference type="PDBsum" id="6SS6"/>
<dbReference type="PDBsum" id="8RFA"/>
<dbReference type="PDBsum" id="8RG6"/>
<dbReference type="PDBsum" id="8RGF"/>
<dbReference type="PDBsum" id="8RGU"/>
<dbReference type="PDBsum" id="8RIM"/>
<dbReference type="PDBsum" id="9FRV"/>
<dbReference type="SMR" id="P78540"/>
<dbReference type="BioGRID" id="106879">
    <property type="interactions" value="18"/>
</dbReference>
<dbReference type="FunCoup" id="P78540">
    <property type="interactions" value="878"/>
</dbReference>
<dbReference type="IntAct" id="P78540">
    <property type="interactions" value="11"/>
</dbReference>
<dbReference type="MINT" id="P78540"/>
<dbReference type="STRING" id="9606.ENSP00000261783"/>
<dbReference type="BindingDB" id="P78540"/>
<dbReference type="ChEMBL" id="CHEMBL1795148"/>
<dbReference type="DrugBank" id="DB00125">
    <property type="generic name" value="Arginine"/>
</dbReference>
<dbReference type="DrugBank" id="DB02381">
    <property type="generic name" value="nor-NOHA"/>
</dbReference>
<dbReference type="DrugBank" id="DB00129">
    <property type="generic name" value="Ornithine"/>
</dbReference>
<dbReference type="DrugBank" id="DB03731">
    <property type="generic name" value="S-2-(Boronoethyl)-L-Cysteine"/>
</dbReference>
<dbReference type="GuidetoPHARMACOLOGY" id="1245"/>
<dbReference type="iPTMnet" id="P78540"/>
<dbReference type="PhosphoSitePlus" id="P78540"/>
<dbReference type="SwissPalm" id="P78540"/>
<dbReference type="BioMuta" id="ARG2"/>
<dbReference type="DMDM" id="2492935"/>
<dbReference type="CPTAC" id="CPTAC-5969"/>
<dbReference type="jPOST" id="P78540"/>
<dbReference type="MassIVE" id="P78540"/>
<dbReference type="PaxDb" id="9606-ENSP00000261783"/>
<dbReference type="PeptideAtlas" id="P78540"/>
<dbReference type="ProteomicsDB" id="57644"/>
<dbReference type="Pumba" id="P78540"/>
<dbReference type="ABCD" id="P78540">
    <property type="antibodies" value="8 sequenced antibodies"/>
</dbReference>
<dbReference type="Antibodypedia" id="1">
    <property type="antibodies" value="440 antibodies from 36 providers"/>
</dbReference>
<dbReference type="CPTC" id="P78540">
    <property type="antibodies" value="1 antibody"/>
</dbReference>
<dbReference type="DNASU" id="384"/>
<dbReference type="Ensembl" id="ENST00000261783.4">
    <property type="protein sequence ID" value="ENSP00000261783.3"/>
    <property type="gene ID" value="ENSG00000081181.8"/>
</dbReference>
<dbReference type="GeneID" id="384"/>
<dbReference type="KEGG" id="hsa:384"/>
<dbReference type="MANE-Select" id="ENST00000261783.4">
    <property type="protein sequence ID" value="ENSP00000261783.3"/>
    <property type="RefSeq nucleotide sequence ID" value="NM_001172.4"/>
    <property type="RefSeq protein sequence ID" value="NP_001163.1"/>
</dbReference>
<dbReference type="UCSC" id="uc001xjs.4">
    <property type="organism name" value="human"/>
</dbReference>
<dbReference type="AGR" id="HGNC:664"/>
<dbReference type="CTD" id="384"/>
<dbReference type="DisGeNET" id="384"/>
<dbReference type="GeneCards" id="ARG2"/>
<dbReference type="HGNC" id="HGNC:664">
    <property type="gene designation" value="ARG2"/>
</dbReference>
<dbReference type="HPA" id="ENSG00000081181">
    <property type="expression patterns" value="Tissue enhanced (parathyroid gland, prostate, thyroid gland)"/>
</dbReference>
<dbReference type="MalaCards" id="ARG2"/>
<dbReference type="MIM" id="107830">
    <property type="type" value="gene"/>
</dbReference>
<dbReference type="neXtProt" id="NX_P78540"/>
<dbReference type="OpenTargets" id="ENSG00000081181"/>
<dbReference type="PharmGKB" id="PA24948"/>
<dbReference type="VEuPathDB" id="HostDB:ENSG00000081181"/>
<dbReference type="eggNOG" id="KOG2965">
    <property type="taxonomic scope" value="Eukaryota"/>
</dbReference>
<dbReference type="GeneTree" id="ENSGT00950000183195"/>
<dbReference type="HOGENOM" id="CLU_039478_6_0_1"/>
<dbReference type="InParanoid" id="P78540"/>
<dbReference type="OMA" id="YKEFRYA"/>
<dbReference type="OrthoDB" id="9992747at2759"/>
<dbReference type="PAN-GO" id="P78540">
    <property type="GO annotations" value="5 GO annotations based on evolutionary models"/>
</dbReference>
<dbReference type="PhylomeDB" id="P78540"/>
<dbReference type="TreeFam" id="TF300034"/>
<dbReference type="BioCyc" id="MetaCyc:HS01388-MONOMER"/>
<dbReference type="BRENDA" id="3.5.3.1">
    <property type="organism ID" value="2681"/>
</dbReference>
<dbReference type="PathwayCommons" id="P78540"/>
<dbReference type="Reactome" id="R-HSA-70635">
    <property type="pathway name" value="Urea cycle"/>
</dbReference>
<dbReference type="Reactome" id="R-HSA-9837999">
    <property type="pathway name" value="Mitochondrial protein degradation"/>
</dbReference>
<dbReference type="SABIO-RK" id="P78540"/>
<dbReference type="SignaLink" id="P78540"/>
<dbReference type="SIGNOR" id="P78540"/>
<dbReference type="UniPathway" id="UPA00158">
    <property type="reaction ID" value="UER00270"/>
</dbReference>
<dbReference type="BioGRID-ORCS" id="384">
    <property type="hits" value="15 hits in 1167 CRISPR screens"/>
</dbReference>
<dbReference type="ChiTaRS" id="ARG2">
    <property type="organism name" value="human"/>
</dbReference>
<dbReference type="EvolutionaryTrace" id="P78540"/>
<dbReference type="GenomeRNAi" id="384"/>
<dbReference type="Pharos" id="P78540">
    <property type="development level" value="Tchem"/>
</dbReference>
<dbReference type="PRO" id="PR:P78540"/>
<dbReference type="Proteomes" id="UP000005640">
    <property type="component" value="Chromosome 14"/>
</dbReference>
<dbReference type="RNAct" id="P78540">
    <property type="molecule type" value="protein"/>
</dbReference>
<dbReference type="Bgee" id="ENSG00000081181">
    <property type="expression patterns" value="Expressed in tendon of biceps brachii and 188 other cell types or tissues"/>
</dbReference>
<dbReference type="ExpressionAtlas" id="P78540">
    <property type="expression patterns" value="baseline and differential"/>
</dbReference>
<dbReference type="GO" id="GO:0005737">
    <property type="term" value="C:cytoplasm"/>
    <property type="evidence" value="ECO:0000318"/>
    <property type="project" value="GO_Central"/>
</dbReference>
<dbReference type="GO" id="GO:0005759">
    <property type="term" value="C:mitochondrial matrix"/>
    <property type="evidence" value="ECO:0000304"/>
    <property type="project" value="Reactome"/>
</dbReference>
<dbReference type="GO" id="GO:0005739">
    <property type="term" value="C:mitochondrion"/>
    <property type="evidence" value="ECO:0006056"/>
    <property type="project" value="FlyBase"/>
</dbReference>
<dbReference type="GO" id="GO:0004053">
    <property type="term" value="F:arginase activity"/>
    <property type="evidence" value="ECO:0000315"/>
    <property type="project" value="CACAO"/>
</dbReference>
<dbReference type="GO" id="GO:0030145">
    <property type="term" value="F:manganese ion binding"/>
    <property type="evidence" value="ECO:0000318"/>
    <property type="project" value="GO_Central"/>
</dbReference>
<dbReference type="GO" id="GO:0002250">
    <property type="term" value="P:adaptive immune response"/>
    <property type="evidence" value="ECO:0007669"/>
    <property type="project" value="UniProtKB-KW"/>
</dbReference>
<dbReference type="GO" id="GO:0019547">
    <property type="term" value="P:arginine catabolic process to ornithine"/>
    <property type="evidence" value="ECO:0000318"/>
    <property type="project" value="GO_Central"/>
</dbReference>
<dbReference type="GO" id="GO:0045087">
    <property type="term" value="P:innate immune response"/>
    <property type="evidence" value="ECO:0007669"/>
    <property type="project" value="UniProtKB-KW"/>
</dbReference>
<dbReference type="GO" id="GO:1905403">
    <property type="term" value="P:negative regulation of activated CD8-positive, alpha-beta T cell apoptotic process"/>
    <property type="evidence" value="ECO:0007669"/>
    <property type="project" value="Ensembl"/>
</dbReference>
<dbReference type="GO" id="GO:2000562">
    <property type="term" value="P:negative regulation of CD4-positive, alpha-beta T cell proliferation"/>
    <property type="evidence" value="ECO:0007669"/>
    <property type="project" value="Ensembl"/>
</dbReference>
<dbReference type="GO" id="GO:0071644">
    <property type="term" value="P:negative regulation of chemokine (C-C motif) ligand 4 production"/>
    <property type="evidence" value="ECO:0007669"/>
    <property type="project" value="Ensembl"/>
</dbReference>
<dbReference type="GO" id="GO:0071650">
    <property type="term" value="P:negative regulation of chemokine (C-C motif) ligand 5 production"/>
    <property type="evidence" value="ECO:0007669"/>
    <property type="project" value="Ensembl"/>
</dbReference>
<dbReference type="GO" id="GO:1900425">
    <property type="term" value="P:negative regulation of defense response to bacterium"/>
    <property type="evidence" value="ECO:0007669"/>
    <property type="project" value="Ensembl"/>
</dbReference>
<dbReference type="GO" id="GO:0032696">
    <property type="term" value="P:negative regulation of interleukin-13 production"/>
    <property type="evidence" value="ECO:0007669"/>
    <property type="project" value="Ensembl"/>
</dbReference>
<dbReference type="GO" id="GO:0032700">
    <property type="term" value="P:negative regulation of interleukin-17 production"/>
    <property type="evidence" value="ECO:0007669"/>
    <property type="project" value="Ensembl"/>
</dbReference>
<dbReference type="GO" id="GO:0071641">
    <property type="term" value="P:negative regulation of macrophage inflammatory protein 1 alpha production"/>
    <property type="evidence" value="ECO:0007669"/>
    <property type="project" value="Ensembl"/>
</dbReference>
<dbReference type="GO" id="GO:0032720">
    <property type="term" value="P:negative regulation of tumor necrosis factor production"/>
    <property type="evidence" value="ECO:0000315"/>
    <property type="project" value="UniProtKB"/>
</dbReference>
<dbReference type="GO" id="GO:0002829">
    <property type="term" value="P:negative regulation of type 2 immune response"/>
    <property type="evidence" value="ECO:0007669"/>
    <property type="project" value="Ensembl"/>
</dbReference>
<dbReference type="GO" id="GO:0006809">
    <property type="term" value="P:nitric oxide biosynthetic process"/>
    <property type="evidence" value="ECO:0000304"/>
    <property type="project" value="ProtInc"/>
</dbReference>
<dbReference type="GO" id="GO:2000774">
    <property type="term" value="P:positive regulation of cellular senescence"/>
    <property type="evidence" value="ECO:0000314"/>
    <property type="project" value="UniProtKB"/>
</dbReference>
<dbReference type="GO" id="GO:0032651">
    <property type="term" value="P:regulation of interleukin-1 beta production"/>
    <property type="evidence" value="ECO:0007669"/>
    <property type="project" value="Ensembl"/>
</dbReference>
<dbReference type="GO" id="GO:1903426">
    <property type="term" value="P:regulation of reactive oxygen species biosynthetic process"/>
    <property type="evidence" value="ECO:0007669"/>
    <property type="project" value="Ensembl"/>
</dbReference>
<dbReference type="GO" id="GO:0006941">
    <property type="term" value="P:striated muscle contraction"/>
    <property type="evidence" value="ECO:0007669"/>
    <property type="project" value="Ensembl"/>
</dbReference>
<dbReference type="GO" id="GO:0000050">
    <property type="term" value="P:urea cycle"/>
    <property type="evidence" value="ECO:0007669"/>
    <property type="project" value="UniProtKB-UniPathway"/>
</dbReference>
<dbReference type="GO" id="GO:0001657">
    <property type="term" value="P:ureteric bud development"/>
    <property type="evidence" value="ECO:0007669"/>
    <property type="project" value="Ensembl"/>
</dbReference>
<dbReference type="CDD" id="cd09989">
    <property type="entry name" value="Arginase"/>
    <property type="match status" value="1"/>
</dbReference>
<dbReference type="FunFam" id="3.40.800.10:FF:000008">
    <property type="entry name" value="Arginase"/>
    <property type="match status" value="1"/>
</dbReference>
<dbReference type="Gene3D" id="3.40.800.10">
    <property type="entry name" value="Ureohydrolase domain"/>
    <property type="match status" value="1"/>
</dbReference>
<dbReference type="InterPro" id="IPR014033">
    <property type="entry name" value="Arginase"/>
</dbReference>
<dbReference type="InterPro" id="IPR006035">
    <property type="entry name" value="Ureohydrolase"/>
</dbReference>
<dbReference type="InterPro" id="IPR023696">
    <property type="entry name" value="Ureohydrolase_dom_sf"/>
</dbReference>
<dbReference type="InterPro" id="IPR020855">
    <property type="entry name" value="Ureohydrolase_Mn_BS"/>
</dbReference>
<dbReference type="NCBIfam" id="TIGR01229">
    <property type="entry name" value="rocF_arginase"/>
    <property type="match status" value="1"/>
</dbReference>
<dbReference type="PANTHER" id="PTHR43782">
    <property type="entry name" value="ARGINASE"/>
    <property type="match status" value="1"/>
</dbReference>
<dbReference type="PANTHER" id="PTHR43782:SF4">
    <property type="entry name" value="ARGINASE-2, MITOCHONDRIAL"/>
    <property type="match status" value="1"/>
</dbReference>
<dbReference type="Pfam" id="PF00491">
    <property type="entry name" value="Arginase"/>
    <property type="match status" value="1"/>
</dbReference>
<dbReference type="PIRSF" id="PIRSF036979">
    <property type="entry name" value="Arginase"/>
    <property type="match status" value="1"/>
</dbReference>
<dbReference type="PRINTS" id="PR00116">
    <property type="entry name" value="ARGINASE"/>
</dbReference>
<dbReference type="SUPFAM" id="SSF52768">
    <property type="entry name" value="Arginase/deacetylase"/>
    <property type="match status" value="1"/>
</dbReference>
<dbReference type="PROSITE" id="PS01053">
    <property type="entry name" value="ARGINASE_1"/>
    <property type="match status" value="1"/>
</dbReference>
<dbReference type="PROSITE" id="PS51409">
    <property type="entry name" value="ARGINASE_2"/>
    <property type="match status" value="1"/>
</dbReference>
<organism>
    <name type="scientific">Homo sapiens</name>
    <name type="common">Human</name>
    <dbReference type="NCBI Taxonomy" id="9606"/>
    <lineage>
        <taxon>Eukaryota</taxon>
        <taxon>Metazoa</taxon>
        <taxon>Chordata</taxon>
        <taxon>Craniata</taxon>
        <taxon>Vertebrata</taxon>
        <taxon>Euteleostomi</taxon>
        <taxon>Mammalia</taxon>
        <taxon>Eutheria</taxon>
        <taxon>Euarchontoglires</taxon>
        <taxon>Primates</taxon>
        <taxon>Haplorrhini</taxon>
        <taxon>Catarrhini</taxon>
        <taxon>Hominidae</taxon>
        <taxon>Homo</taxon>
    </lineage>
</organism>
<comment type="function">
    <text evidence="1 7 8 9 10 11 12">May play a role in the regulation of extra-urea cycle arginine metabolism and also in down-regulation of nitric oxide synthesis. Extrahepatic arginase functions to regulate L-arginine bioavailability to nitric oxid synthase (NOS). Arginine metabolism is a critical regulator of innate and adaptive immune responses. Seems to be involved in negative regulation of the survival capacity of activated CD4(+) and CD8(+) T cells (PubMed:27745970). May suppress inflammation-related signaling in asthmatic airway epithelium (PubMed:27214549). May contribute to the immune evasion of H.pylori by restricting M1 macrophage activation and polyamine metabolism (By similarity). In fetal dendritic cells may play a role in promoting immune suppression and T cell TNF-alpha production during gestation (PubMed:28614294). Regulates RPS6KB1 signaling, which promotes endothelial cell senescence and inflammation and implicates NOS3/eNOS dysfunction (PubMed:22928666). Can inhibit endothelial autophagy independently of its enzymatic activity implicating mTORC2 signaling (PubMed:25484082). Involved in vascular smooth muscle cell senescence and apoptosis independently of its enzymatic activity (PubMed:23832324). Since NOS is found in the penile corpus cavernosum smooth muscle, the clitoral corpus cavernosum and the vagina, arginase-2 plays a role in both male and female sexual arousal (PubMed:12859189).</text>
</comment>
<comment type="catalytic activity">
    <reaction evidence="7">
        <text>L-arginine + H2O = urea + L-ornithine</text>
        <dbReference type="Rhea" id="RHEA:20569"/>
        <dbReference type="ChEBI" id="CHEBI:15377"/>
        <dbReference type="ChEBI" id="CHEBI:16199"/>
        <dbReference type="ChEBI" id="CHEBI:32682"/>
        <dbReference type="ChEBI" id="CHEBI:46911"/>
        <dbReference type="EC" id="3.5.3.1"/>
    </reaction>
</comment>
<comment type="cofactor">
    <cofactor evidence="5 7">
        <name>Mn(2+)</name>
        <dbReference type="ChEBI" id="CHEBI:29035"/>
    </cofactor>
    <text evidence="5 7">Binds 2 manganese ions per subunit.</text>
</comment>
<comment type="pathway">
    <text evidence="2">Nitrogen metabolism; urea cycle; L-ornithine and urea from L-arginine: step 1/1.</text>
</comment>
<comment type="subunit">
    <text evidence="7">Homotrimer.</text>
</comment>
<comment type="interaction">
    <interactant intactId="EBI-9056613">
        <id>P78540</id>
    </interactant>
    <interactant intactId="EBI-6425864">
        <id>Q3SYB3</id>
        <label>FOXD4L6</label>
    </interactant>
    <organismsDiffer>false</organismsDiffer>
    <experiments>3</experiments>
</comment>
<comment type="subcellular location">
    <subcellularLocation>
        <location evidence="13">Mitochondrion</location>
    </subcellularLocation>
</comment>
<comment type="tissue specificity">
    <text evidence="12">Expressed most strongly in kidney and prostate, much less strongly in the brain, skeletal muscle, placenta, lung, mammary gland, macrophage, uterus, testis and gut, but apparently not in the liver, heart and pancreas. Expressed in activated T cells (PubMed:27745970).</text>
</comment>
<comment type="similarity">
    <text evidence="5">Belongs to the arginase family.</text>
</comment>
<comment type="online information" name="Wikipedia">
    <link uri="https://en.wikipedia.org/wiki/Arginase"/>
    <text>Arginase entry</text>
</comment>
<sequence length="354" mass="38578">MSLRGSLSRLLQTRVHSILKKSVHSVAVIGAPFSQGQKRKGVEHGPAAIREAGLMKRLSSLGCHLKDFGDLSFTPVPKDDLYNNLIVNPRSVGLANQELAEVVSRAVSDGYSCVTLGGDHSLAIGTISGHARHCPDLCVVWVDAHADINTPLTTSSGNLHGQPVSFLLRELQDKVPQLPGFSWIKPCISSASIVYIGLRDVDPPEHFILKNYDIQYFSMRDIDRLGIQKVMERTFDLLIGKRQRPIHLSFDIDAFDPTLAPATGTPVVGGLTYREGMYIAEEIHNTGLLSALDLVEVNPQLATSEEEAKTTANLAVDVIASSFGQTREGGHIVYDQLPTPSSPDESENQARVRI</sequence>
<accession>P78540</accession>
<accession>B2R690</accession>
<accession>Q6FHY8</accession>
<evidence type="ECO:0000250" key="1">
    <source>
        <dbReference type="UniProtKB" id="O08691"/>
    </source>
</evidence>
<evidence type="ECO:0000250" key="2">
    <source>
        <dbReference type="UniProtKB" id="P05089"/>
    </source>
</evidence>
<evidence type="ECO:0000250" key="3">
    <source>
        <dbReference type="UniProtKB" id="P53608"/>
    </source>
</evidence>
<evidence type="ECO:0000255" key="4"/>
<evidence type="ECO:0000255" key="5">
    <source>
        <dbReference type="PROSITE-ProRule" id="PRU00742"/>
    </source>
</evidence>
<evidence type="ECO:0000256" key="6">
    <source>
        <dbReference type="SAM" id="MobiDB-lite"/>
    </source>
</evidence>
<evidence type="ECO:0000269" key="7">
    <source>
    </source>
</evidence>
<evidence type="ECO:0000269" key="8">
    <source>
    </source>
</evidence>
<evidence type="ECO:0000269" key="9">
    <source>
    </source>
</evidence>
<evidence type="ECO:0000269" key="10">
    <source>
    </source>
</evidence>
<evidence type="ECO:0000269" key="11">
    <source>
    </source>
</evidence>
<evidence type="ECO:0000269" key="12">
    <source>
    </source>
</evidence>
<evidence type="ECO:0000269" key="13">
    <source>
    </source>
</evidence>
<evidence type="ECO:0007744" key="14">
    <source>
        <dbReference type="PDB" id="1PQ3"/>
    </source>
</evidence>
<evidence type="ECO:0007744" key="15">
    <source>
        <dbReference type="PDB" id="4HZE"/>
    </source>
</evidence>
<evidence type="ECO:0007744" key="16">
    <source>
        <dbReference type="PDB" id="4I06"/>
    </source>
</evidence>
<evidence type="ECO:0007744" key="17">
    <source>
        <dbReference type="PDB" id="4IE2"/>
    </source>
</evidence>
<evidence type="ECO:0007744" key="18">
    <source>
        <dbReference type="PDB" id="4IE3"/>
    </source>
</evidence>
<evidence type="ECO:0007744" key="19">
    <source>
        <dbReference type="PDB" id="4IXU"/>
    </source>
</evidence>
<evidence type="ECO:0007744" key="20">
    <source>
        <dbReference type="PDB" id="4IXV"/>
    </source>
</evidence>
<evidence type="ECO:0007829" key="21">
    <source>
        <dbReference type="PDB" id="1PQ3"/>
    </source>
</evidence>
<evidence type="ECO:0007829" key="22">
    <source>
        <dbReference type="PDB" id="4HZE"/>
    </source>
</evidence>
<protein>
    <recommendedName>
        <fullName>Arginase-2, mitochondrial</fullName>
        <ecNumber evidence="7">3.5.3.1</ecNumber>
    </recommendedName>
    <alternativeName>
        <fullName>Arginase II</fullName>
    </alternativeName>
    <alternativeName>
        <fullName>Kidney-type arginase</fullName>
    </alternativeName>
    <alternativeName>
        <fullName>Non-hepatic arginase</fullName>
    </alternativeName>
    <alternativeName>
        <fullName>Type II arginase</fullName>
    </alternativeName>
</protein>
<name>ARGI2_HUMAN</name>
<proteinExistence type="evidence at protein level"/>
<keyword id="KW-0002">3D-structure</keyword>
<keyword id="KW-1064">Adaptive immunity</keyword>
<keyword id="KW-0056">Arginine metabolism</keyword>
<keyword id="KW-0378">Hydrolase</keyword>
<keyword id="KW-0391">Immunity</keyword>
<keyword id="KW-0399">Innate immunity</keyword>
<keyword id="KW-0464">Manganese</keyword>
<keyword id="KW-0479">Metal-binding</keyword>
<keyword id="KW-0496">Mitochondrion</keyword>
<keyword id="KW-1267">Proteomics identification</keyword>
<keyword id="KW-1185">Reference proteome</keyword>
<keyword id="KW-0809">Transit peptide</keyword>
<keyword id="KW-0835">Urea cycle</keyword>